<organism>
    <name type="scientific">Yersinia enterocolitica serotype O:8 / biotype 1B (strain NCTC 13174 / 8081)</name>
    <dbReference type="NCBI Taxonomy" id="393305"/>
    <lineage>
        <taxon>Bacteria</taxon>
        <taxon>Pseudomonadati</taxon>
        <taxon>Pseudomonadota</taxon>
        <taxon>Gammaproteobacteria</taxon>
        <taxon>Enterobacterales</taxon>
        <taxon>Yersiniaceae</taxon>
        <taxon>Yersinia</taxon>
    </lineage>
</organism>
<gene>
    <name type="ordered locus">YE2365</name>
</gene>
<sequence>MSQLPFWQQKTLAEMSDSEWESLCDGCGQCCLNKLIDEDTDEIYFTNVACDQLNLKTCQCRNYERRFELEEDCIKLTRENLVTFEWLPPTCAYRLIGEGHDLPKWHPLLAGSKSAMHGERISVRHIAVRESEVIDWQDHILNKPQWAR</sequence>
<accession>A1JRA2</accession>
<reference key="1">
    <citation type="journal article" date="2006" name="PLoS Genet.">
        <title>The complete genome sequence and comparative genome analysis of the high pathogenicity Yersinia enterocolitica strain 8081.</title>
        <authorList>
            <person name="Thomson N.R."/>
            <person name="Howard S."/>
            <person name="Wren B.W."/>
            <person name="Holden M.T.G."/>
            <person name="Crossman L."/>
            <person name="Challis G.L."/>
            <person name="Churcher C."/>
            <person name="Mungall K."/>
            <person name="Brooks K."/>
            <person name="Chillingworth T."/>
            <person name="Feltwell T."/>
            <person name="Abdellah Z."/>
            <person name="Hauser H."/>
            <person name="Jagels K."/>
            <person name="Maddison M."/>
            <person name="Moule S."/>
            <person name="Sanders M."/>
            <person name="Whitehead S."/>
            <person name="Quail M.A."/>
            <person name="Dougan G."/>
            <person name="Parkhill J."/>
            <person name="Prentice M.B."/>
        </authorList>
    </citation>
    <scope>NUCLEOTIDE SEQUENCE [LARGE SCALE GENOMIC DNA]</scope>
    <source>
        <strain>NCTC 13174 / 8081</strain>
    </source>
</reference>
<comment type="similarity">
    <text evidence="1">Belongs to the UPF0260 family.</text>
</comment>
<name>Y2365_YERE8</name>
<protein>
    <recommendedName>
        <fullName evidence="1">UPF0260 protein YE2365</fullName>
    </recommendedName>
</protein>
<proteinExistence type="inferred from homology"/>
<evidence type="ECO:0000255" key="1">
    <source>
        <dbReference type="HAMAP-Rule" id="MF_00676"/>
    </source>
</evidence>
<dbReference type="EMBL" id="AM286415">
    <property type="protein sequence ID" value="CAL12418.1"/>
    <property type="molecule type" value="Genomic_DNA"/>
</dbReference>
<dbReference type="RefSeq" id="WP_005162992.1">
    <property type="nucleotide sequence ID" value="NC_008800.1"/>
</dbReference>
<dbReference type="RefSeq" id="YP_001006585.1">
    <property type="nucleotide sequence ID" value="NC_008800.1"/>
</dbReference>
<dbReference type="KEGG" id="yen:YE2365"/>
<dbReference type="PATRIC" id="fig|393305.7.peg.2520"/>
<dbReference type="eggNOG" id="COG2983">
    <property type="taxonomic scope" value="Bacteria"/>
</dbReference>
<dbReference type="HOGENOM" id="CLU_109769_2_0_6"/>
<dbReference type="OrthoDB" id="9786855at2"/>
<dbReference type="Proteomes" id="UP000000642">
    <property type="component" value="Chromosome"/>
</dbReference>
<dbReference type="HAMAP" id="MF_00676">
    <property type="entry name" value="UPF0260"/>
    <property type="match status" value="1"/>
</dbReference>
<dbReference type="InterPro" id="IPR005358">
    <property type="entry name" value="Puta_zinc/iron-chelating_dom"/>
</dbReference>
<dbReference type="InterPro" id="IPR008228">
    <property type="entry name" value="UCP006173"/>
</dbReference>
<dbReference type="NCBIfam" id="NF003498">
    <property type="entry name" value="PRK05170.1-1"/>
    <property type="match status" value="1"/>
</dbReference>
<dbReference type="NCBIfam" id="NF003501">
    <property type="entry name" value="PRK05170.1-5"/>
    <property type="match status" value="1"/>
</dbReference>
<dbReference type="NCBIfam" id="NF003507">
    <property type="entry name" value="PRK05170.2-5"/>
    <property type="match status" value="1"/>
</dbReference>
<dbReference type="PANTHER" id="PTHR37421">
    <property type="entry name" value="UPF0260 PROTEIN YCGN"/>
    <property type="match status" value="1"/>
</dbReference>
<dbReference type="PANTHER" id="PTHR37421:SF1">
    <property type="entry name" value="UPF0260 PROTEIN YCGN"/>
    <property type="match status" value="1"/>
</dbReference>
<dbReference type="Pfam" id="PF03692">
    <property type="entry name" value="CxxCxxCC"/>
    <property type="match status" value="1"/>
</dbReference>
<dbReference type="PIRSF" id="PIRSF006173">
    <property type="entry name" value="UCP006173"/>
    <property type="match status" value="1"/>
</dbReference>
<feature type="chain" id="PRO_1000044817" description="UPF0260 protein YE2365">
    <location>
        <begin position="1"/>
        <end position="148"/>
    </location>
</feature>